<gene>
    <name evidence="1" type="primary">rpiA</name>
    <name type="ordered locus">PMN2A_1020</name>
</gene>
<reference key="1">
    <citation type="journal article" date="2007" name="PLoS Genet.">
        <title>Patterns and implications of gene gain and loss in the evolution of Prochlorococcus.</title>
        <authorList>
            <person name="Kettler G.C."/>
            <person name="Martiny A.C."/>
            <person name="Huang K."/>
            <person name="Zucker J."/>
            <person name="Coleman M.L."/>
            <person name="Rodrigue S."/>
            <person name="Chen F."/>
            <person name="Lapidus A."/>
            <person name="Ferriera S."/>
            <person name="Johnson J."/>
            <person name="Steglich C."/>
            <person name="Church G.M."/>
            <person name="Richardson P."/>
            <person name="Chisholm S.W."/>
        </authorList>
    </citation>
    <scope>NUCLEOTIDE SEQUENCE [LARGE SCALE GENOMIC DNA]</scope>
    <source>
        <strain>NATL2A</strain>
    </source>
</reference>
<organism>
    <name type="scientific">Prochlorococcus marinus (strain NATL2A)</name>
    <dbReference type="NCBI Taxonomy" id="59920"/>
    <lineage>
        <taxon>Bacteria</taxon>
        <taxon>Bacillati</taxon>
        <taxon>Cyanobacteriota</taxon>
        <taxon>Cyanophyceae</taxon>
        <taxon>Synechococcales</taxon>
        <taxon>Prochlorococcaceae</taxon>
        <taxon>Prochlorococcus</taxon>
    </lineage>
</organism>
<proteinExistence type="inferred from homology"/>
<evidence type="ECO:0000255" key="1">
    <source>
        <dbReference type="HAMAP-Rule" id="MF_00170"/>
    </source>
</evidence>
<feature type="chain" id="PRO_1000194715" description="Ribose-5-phosphate isomerase A">
    <location>
        <begin position="1"/>
        <end position="236"/>
    </location>
</feature>
<feature type="active site" description="Proton acceptor" evidence="1">
    <location>
        <position position="108"/>
    </location>
</feature>
<feature type="binding site" evidence="1">
    <location>
        <begin position="29"/>
        <end position="32"/>
    </location>
    <ligand>
        <name>substrate</name>
    </ligand>
</feature>
<feature type="binding site" evidence="1">
    <location>
        <begin position="86"/>
        <end position="89"/>
    </location>
    <ligand>
        <name>substrate</name>
    </ligand>
</feature>
<feature type="binding site" evidence="1">
    <location>
        <begin position="99"/>
        <end position="102"/>
    </location>
    <ligand>
        <name>substrate</name>
    </ligand>
</feature>
<feature type="binding site" evidence="1">
    <location>
        <position position="126"/>
    </location>
    <ligand>
        <name>substrate</name>
    </ligand>
</feature>
<protein>
    <recommendedName>
        <fullName evidence="1">Ribose-5-phosphate isomerase A</fullName>
        <ecNumber evidence="1">5.3.1.6</ecNumber>
    </recommendedName>
    <alternativeName>
        <fullName evidence="1">Phosphoriboisomerase A</fullName>
        <shortName evidence="1">PRI</shortName>
    </alternativeName>
</protein>
<name>RPIA_PROMT</name>
<keyword id="KW-0413">Isomerase</keyword>
<keyword id="KW-1185">Reference proteome</keyword>
<dbReference type="EC" id="5.3.1.6" evidence="1"/>
<dbReference type="EMBL" id="CP000095">
    <property type="protein sequence ID" value="AAZ58510.1"/>
    <property type="molecule type" value="Genomic_DNA"/>
</dbReference>
<dbReference type="RefSeq" id="WP_011295365.1">
    <property type="nucleotide sequence ID" value="NC_007335.2"/>
</dbReference>
<dbReference type="SMR" id="Q46J18"/>
<dbReference type="STRING" id="59920.PMN2A_1020"/>
<dbReference type="KEGG" id="pmn:PMN2A_1020"/>
<dbReference type="HOGENOM" id="CLU_056590_1_1_3"/>
<dbReference type="OrthoDB" id="5870696at2"/>
<dbReference type="PhylomeDB" id="Q46J18"/>
<dbReference type="UniPathway" id="UPA00115">
    <property type="reaction ID" value="UER00412"/>
</dbReference>
<dbReference type="Proteomes" id="UP000002535">
    <property type="component" value="Chromosome"/>
</dbReference>
<dbReference type="GO" id="GO:0005829">
    <property type="term" value="C:cytosol"/>
    <property type="evidence" value="ECO:0007669"/>
    <property type="project" value="TreeGrafter"/>
</dbReference>
<dbReference type="GO" id="GO:0004751">
    <property type="term" value="F:ribose-5-phosphate isomerase activity"/>
    <property type="evidence" value="ECO:0007669"/>
    <property type="project" value="UniProtKB-UniRule"/>
</dbReference>
<dbReference type="GO" id="GO:0006014">
    <property type="term" value="P:D-ribose metabolic process"/>
    <property type="evidence" value="ECO:0007669"/>
    <property type="project" value="TreeGrafter"/>
</dbReference>
<dbReference type="GO" id="GO:0009052">
    <property type="term" value="P:pentose-phosphate shunt, non-oxidative branch"/>
    <property type="evidence" value="ECO:0007669"/>
    <property type="project" value="UniProtKB-UniRule"/>
</dbReference>
<dbReference type="CDD" id="cd01398">
    <property type="entry name" value="RPI_A"/>
    <property type="match status" value="1"/>
</dbReference>
<dbReference type="FunFam" id="3.30.70.260:FF:000018">
    <property type="entry name" value="Ribose-5-phosphate isomerase A"/>
    <property type="match status" value="1"/>
</dbReference>
<dbReference type="FunFam" id="3.40.50.1360:FF:000001">
    <property type="entry name" value="Ribose-5-phosphate isomerase A"/>
    <property type="match status" value="1"/>
</dbReference>
<dbReference type="Gene3D" id="3.30.70.260">
    <property type="match status" value="1"/>
</dbReference>
<dbReference type="Gene3D" id="3.40.50.1360">
    <property type="match status" value="1"/>
</dbReference>
<dbReference type="HAMAP" id="MF_00170">
    <property type="entry name" value="Rib_5P_isom_A"/>
    <property type="match status" value="1"/>
</dbReference>
<dbReference type="InterPro" id="IPR037171">
    <property type="entry name" value="NagB/RpiA_transferase-like"/>
</dbReference>
<dbReference type="InterPro" id="IPR020672">
    <property type="entry name" value="Ribose5P_isomerase_typA_subgr"/>
</dbReference>
<dbReference type="InterPro" id="IPR004788">
    <property type="entry name" value="Ribose5P_isomerase_type_A"/>
</dbReference>
<dbReference type="NCBIfam" id="NF001924">
    <property type="entry name" value="PRK00702.1"/>
    <property type="match status" value="1"/>
</dbReference>
<dbReference type="NCBIfam" id="TIGR00021">
    <property type="entry name" value="rpiA"/>
    <property type="match status" value="1"/>
</dbReference>
<dbReference type="PANTHER" id="PTHR11934">
    <property type="entry name" value="RIBOSE-5-PHOSPHATE ISOMERASE"/>
    <property type="match status" value="1"/>
</dbReference>
<dbReference type="PANTHER" id="PTHR11934:SF0">
    <property type="entry name" value="RIBOSE-5-PHOSPHATE ISOMERASE"/>
    <property type="match status" value="1"/>
</dbReference>
<dbReference type="Pfam" id="PF06026">
    <property type="entry name" value="Rib_5-P_isom_A"/>
    <property type="match status" value="1"/>
</dbReference>
<dbReference type="SUPFAM" id="SSF75445">
    <property type="entry name" value="D-ribose-5-phosphate isomerase (RpiA), lid domain"/>
    <property type="match status" value="1"/>
</dbReference>
<dbReference type="SUPFAM" id="SSF100950">
    <property type="entry name" value="NagB/RpiA/CoA transferase-like"/>
    <property type="match status" value="1"/>
</dbReference>
<accession>Q46J18</accession>
<comment type="function">
    <text evidence="1">Catalyzes the reversible conversion of ribose-5-phosphate to ribulose 5-phosphate.</text>
</comment>
<comment type="catalytic activity">
    <reaction evidence="1">
        <text>aldehydo-D-ribose 5-phosphate = D-ribulose 5-phosphate</text>
        <dbReference type="Rhea" id="RHEA:14657"/>
        <dbReference type="ChEBI" id="CHEBI:58121"/>
        <dbReference type="ChEBI" id="CHEBI:58273"/>
        <dbReference type="EC" id="5.3.1.6"/>
    </reaction>
</comment>
<comment type="pathway">
    <text evidence="1">Carbohydrate degradation; pentose phosphate pathway; D-ribose 5-phosphate from D-ribulose 5-phosphate (non-oxidative stage): step 1/1.</text>
</comment>
<comment type="subunit">
    <text evidence="1">Homodimer.</text>
</comment>
<comment type="similarity">
    <text evidence="1">Belongs to the ribose 5-phosphate isomerase family.</text>
</comment>
<sequence>MDLQNQMKKAVAQAAVDQIQNGMILGLGSGSTAALMIEALAIKIKSGEIKDVVGVTTSFQGEVLASELGIPLKSLSSVSEIDLAIDGADEVNPKFQLIKGGGACHVQEKLVAALAKKFIVVVDSTKLVEKLNLDFKLPVEVLPSAWKQVQKTLINLGGEGNLRMAQKKAGPIVTDQGNLILDLTFRNGIDKPELLESQINNIPGVLENGLFVNLTDEVLVGKVESDVVGVESLKKI</sequence>